<sequence length="391" mass="44475">MLKMAKVEPVERYCKVIRMIRFCVGFCGNDVADPNFRMWWLTYAVMAAIAFFFACTGYTIYVGVVINGDLTIILQALAMVGSAVQGLTKLLVTANNASHMREVQNTYEDIYREYGSKGDEYAKCLEKRIRITWTLLIGFMLVYIILLGLVITFPIFYLLILHQKVLVMQFLIPFLDHTTDGGHLILTAAHVILITFGGFGNYGGDMYLFLFVTHVPLIKDIFCVKLTEFNELVMKRNDFPKVRAMLCDLLVWHQLYTRMLQTTKKIYSIVLFVQLSTTCVGLLCTISCIFMKAWPAAPLYLLYAAITLYTFCGLGTLVENSNEDFLSVIYTNCLWYELPVKEEKLIIMMLAKAQNEVVLTAADMAPLSMNTALQLTKGIYSFSMMLMNYLG</sequence>
<gene>
    <name type="primary">Or67d</name>
    <name type="ORF">CG14157</name>
</gene>
<name>OR67D_DROME</name>
<keyword id="KW-1003">Cell membrane</keyword>
<keyword id="KW-0472">Membrane</keyword>
<keyword id="KW-0552">Olfaction</keyword>
<keyword id="KW-0675">Receptor</keyword>
<keyword id="KW-1185">Reference proteome</keyword>
<keyword id="KW-0716">Sensory transduction</keyword>
<keyword id="KW-0807">Transducer</keyword>
<keyword id="KW-0812">Transmembrane</keyword>
<keyword id="KW-1133">Transmembrane helix</keyword>
<proteinExistence type="evidence at transcript level"/>
<organism evidence="11">
    <name type="scientific">Drosophila melanogaster</name>
    <name type="common">Fruit fly</name>
    <dbReference type="NCBI Taxonomy" id="7227"/>
    <lineage>
        <taxon>Eukaryota</taxon>
        <taxon>Metazoa</taxon>
        <taxon>Ecdysozoa</taxon>
        <taxon>Arthropoda</taxon>
        <taxon>Hexapoda</taxon>
        <taxon>Insecta</taxon>
        <taxon>Pterygota</taxon>
        <taxon>Neoptera</taxon>
        <taxon>Endopterygota</taxon>
        <taxon>Diptera</taxon>
        <taxon>Brachycera</taxon>
        <taxon>Muscomorpha</taxon>
        <taxon>Ephydroidea</taxon>
        <taxon>Drosophilidae</taxon>
        <taxon>Drosophila</taxon>
        <taxon>Sophophora</taxon>
    </lineage>
</organism>
<dbReference type="EMBL" id="AE014296">
    <property type="protein sequence ID" value="AAF50161.3"/>
    <property type="molecule type" value="Genomic_DNA"/>
</dbReference>
<dbReference type="RefSeq" id="NP_648390.2">
    <property type="nucleotide sequence ID" value="NM_140133.2"/>
</dbReference>
<dbReference type="SMR" id="Q9VT92"/>
<dbReference type="BioGRID" id="64572">
    <property type="interactions" value="3"/>
</dbReference>
<dbReference type="FunCoup" id="Q9VT92">
    <property type="interactions" value="2"/>
</dbReference>
<dbReference type="STRING" id="7227.FBpp0076026"/>
<dbReference type="PaxDb" id="7227-FBpp0076026"/>
<dbReference type="EnsemblMetazoa" id="FBtr0076297">
    <property type="protein sequence ID" value="FBpp0076026"/>
    <property type="gene ID" value="FBgn0036080"/>
</dbReference>
<dbReference type="GeneID" id="39191"/>
<dbReference type="KEGG" id="dme:Dmel_CG14157"/>
<dbReference type="AGR" id="FB:FBgn0036080"/>
<dbReference type="CTD" id="39191"/>
<dbReference type="FlyBase" id="FBgn0036080">
    <property type="gene designation" value="Or67d"/>
</dbReference>
<dbReference type="VEuPathDB" id="VectorBase:FBgn0036080"/>
<dbReference type="eggNOG" id="ENOG502T8K4">
    <property type="taxonomic scope" value="Eukaryota"/>
</dbReference>
<dbReference type="GeneTree" id="ENSGT00530000064384"/>
<dbReference type="HOGENOM" id="CLU_044523_2_0_1"/>
<dbReference type="InParanoid" id="Q9VT92"/>
<dbReference type="OMA" id="TNCLWYE"/>
<dbReference type="OrthoDB" id="6765072at2759"/>
<dbReference type="PhylomeDB" id="Q9VT92"/>
<dbReference type="BioGRID-ORCS" id="39191">
    <property type="hits" value="0 hits in 1 CRISPR screen"/>
</dbReference>
<dbReference type="GenomeRNAi" id="39191"/>
<dbReference type="PRO" id="PR:Q9VT92"/>
<dbReference type="Proteomes" id="UP000000803">
    <property type="component" value="Chromosome 3L"/>
</dbReference>
<dbReference type="Bgee" id="FBgn0036080">
    <property type="expression patterns" value="Expressed in adult olfactory receptor neuron Or67d (Drosophila) in antenna and 8 other cell types or tissues"/>
</dbReference>
<dbReference type="ExpressionAtlas" id="Q9VT92">
    <property type="expression patterns" value="baseline and differential"/>
</dbReference>
<dbReference type="GO" id="GO:0032590">
    <property type="term" value="C:dendrite membrane"/>
    <property type="evidence" value="ECO:0000250"/>
    <property type="project" value="FlyBase"/>
</dbReference>
<dbReference type="GO" id="GO:0005886">
    <property type="term" value="C:plasma membrane"/>
    <property type="evidence" value="ECO:0000318"/>
    <property type="project" value="GO_Central"/>
</dbReference>
<dbReference type="GO" id="GO:0071683">
    <property type="term" value="C:sensory dendrite"/>
    <property type="evidence" value="ECO:0000314"/>
    <property type="project" value="FlyBase"/>
</dbReference>
<dbReference type="GO" id="GO:0170020">
    <property type="term" value="F:ionotropic olfactory receptor activity"/>
    <property type="evidence" value="ECO:0000315"/>
    <property type="project" value="FlyBase"/>
</dbReference>
<dbReference type="GO" id="GO:0005549">
    <property type="term" value="F:odorant binding"/>
    <property type="evidence" value="ECO:0000250"/>
    <property type="project" value="FlyBase"/>
</dbReference>
<dbReference type="GO" id="GO:0004984">
    <property type="term" value="F:olfactory receptor activity"/>
    <property type="evidence" value="ECO:0000318"/>
    <property type="project" value="GO_Central"/>
</dbReference>
<dbReference type="GO" id="GO:0007619">
    <property type="term" value="P:courtship behavior"/>
    <property type="evidence" value="ECO:0000315"/>
    <property type="project" value="FlyBase"/>
</dbReference>
<dbReference type="GO" id="GO:0050911">
    <property type="term" value="P:detection of chemical stimulus involved in sensory perception of smell"/>
    <property type="evidence" value="ECO:0000315"/>
    <property type="project" value="FlyBase"/>
</dbReference>
<dbReference type="GO" id="GO:0043695">
    <property type="term" value="P:detection of pheromone"/>
    <property type="evidence" value="ECO:0000315"/>
    <property type="project" value="FlyBase"/>
</dbReference>
<dbReference type="GO" id="GO:0019236">
    <property type="term" value="P:response to pheromone"/>
    <property type="evidence" value="ECO:0000315"/>
    <property type="project" value="FlyBase"/>
</dbReference>
<dbReference type="GO" id="GO:0007608">
    <property type="term" value="P:sensory perception of smell"/>
    <property type="evidence" value="ECO:0000250"/>
    <property type="project" value="FlyBase"/>
</dbReference>
<dbReference type="GO" id="GO:0007165">
    <property type="term" value="P:signal transduction"/>
    <property type="evidence" value="ECO:0007669"/>
    <property type="project" value="UniProtKB-KW"/>
</dbReference>
<dbReference type="InterPro" id="IPR004117">
    <property type="entry name" value="7tm6_olfct_rcpt"/>
</dbReference>
<dbReference type="PANTHER" id="PTHR21137">
    <property type="entry name" value="ODORANT RECEPTOR"/>
    <property type="match status" value="1"/>
</dbReference>
<dbReference type="PANTHER" id="PTHR21137:SF35">
    <property type="entry name" value="ODORANT RECEPTOR 19A-RELATED"/>
    <property type="match status" value="1"/>
</dbReference>
<dbReference type="Pfam" id="PF02949">
    <property type="entry name" value="7tm_6"/>
    <property type="match status" value="1"/>
</dbReference>
<feature type="chain" id="PRO_0000174265" description="Odorant receptor 67d">
    <location>
        <begin position="1"/>
        <end position="391"/>
    </location>
</feature>
<feature type="topological domain" description="Cytoplasmic" evidence="2">
    <location>
        <begin position="1"/>
        <end position="45"/>
    </location>
</feature>
<feature type="transmembrane region" description="Helical; Name=1" evidence="2">
    <location>
        <begin position="46"/>
        <end position="66"/>
    </location>
</feature>
<feature type="topological domain" description="Extracellular" evidence="2">
    <location>
        <begin position="67"/>
        <end position="71"/>
    </location>
</feature>
<feature type="transmembrane region" description="Helical; Name=2" evidence="2">
    <location>
        <begin position="72"/>
        <end position="92"/>
    </location>
</feature>
<feature type="topological domain" description="Cytoplasmic" evidence="2">
    <location>
        <begin position="93"/>
        <end position="140"/>
    </location>
</feature>
<feature type="transmembrane region" description="Helical; Name=3" evidence="2">
    <location>
        <begin position="141"/>
        <end position="161"/>
    </location>
</feature>
<feature type="topological domain" description="Extracellular" evidence="2">
    <location>
        <begin position="162"/>
        <end position="164"/>
    </location>
</feature>
<feature type="transmembrane region" description="Helical; Name=4" evidence="2">
    <location>
        <begin position="165"/>
        <end position="185"/>
    </location>
</feature>
<feature type="topological domain" description="Cytoplasmic" evidence="2">
    <location>
        <begin position="186"/>
        <end position="191"/>
    </location>
</feature>
<feature type="transmembrane region" description="Helical; Name=5" evidence="2">
    <location>
        <begin position="192"/>
        <end position="212"/>
    </location>
</feature>
<feature type="topological domain" description="Extracellular" evidence="2">
    <location>
        <begin position="213"/>
        <end position="268"/>
    </location>
</feature>
<feature type="transmembrane region" description="Helical; Name=6" evidence="2">
    <location>
        <begin position="269"/>
        <end position="289"/>
    </location>
</feature>
<feature type="topological domain" description="Cytoplasmic" evidence="2">
    <location>
        <begin position="290"/>
        <end position="297"/>
    </location>
</feature>
<feature type="transmembrane region" description="Helical; Name=7" evidence="2">
    <location>
        <begin position="298"/>
        <end position="318"/>
    </location>
</feature>
<feature type="topological domain" description="Extracellular" evidence="2">
    <location>
        <begin position="319"/>
        <end position="391"/>
    </location>
</feature>
<evidence type="ECO:0000250" key="1"/>
<evidence type="ECO:0000255" key="2"/>
<evidence type="ECO:0000269" key="3">
    <source>
    </source>
</evidence>
<evidence type="ECO:0000269" key="4">
    <source>
    </source>
</evidence>
<evidence type="ECO:0000269" key="5">
    <source>
    </source>
</evidence>
<evidence type="ECO:0000269" key="6">
    <source>
    </source>
</evidence>
<evidence type="ECO:0000269" key="7">
    <source>
    </source>
</evidence>
<evidence type="ECO:0000269" key="8">
    <source>
    </source>
</evidence>
<evidence type="ECO:0000269" key="9">
    <source>
    </source>
</evidence>
<evidence type="ECO:0000305" key="10"/>
<evidence type="ECO:0000312" key="11">
    <source>
        <dbReference type="EMBL" id="AAF50161.3"/>
    </source>
</evidence>
<comment type="function">
    <text evidence="4 5 6 7 8 9">Plays a role in detection and sensitivity to pheromones and signal transduction of the fatty-acid-derived male pheromone 11-cis vaccenyl acetate (cVA). Acts in concert with Snmp and lush to capture cVA molecules on the surface of Or67d expressing olfactory dendrites and facilitate their transfer to the odorant-receptor Orco complex. Necessary to mediate behavioral responses to cVA by regulating both male and female mating behavior. Activation of Or67d neurons by cVA inhibits courtship of other males, whereas in females their activation promotes receptivity to other males. May form a complex with Orco to form odorant-sensing units, providing sensitive and prolonged odorant signaling and calcium permeability.</text>
</comment>
<comment type="subunit">
    <text evidence="1">Interacts with Orco. Complexes exist early in the endomembrane system in olfactory sensory neurons (OSNs), coupling these complexes to the conserved ciliary trafficking pathway (By similarity).</text>
</comment>
<comment type="subcellular location">
    <subcellularLocation>
        <location evidence="1">Cell membrane</location>
        <topology evidence="1">Multi-pass membrane protein</topology>
    </subcellularLocation>
</comment>
<comment type="tissue specificity">
    <text evidence="4 7">Expressed in antenna.</text>
</comment>
<comment type="disruption phenotype">
    <text evidence="6">Mutant males inappropriately court other males, whereas mutant females are less receptive to courting males.</text>
</comment>
<comment type="miscellaneous">
    <text>The atypical heteromeric and topological design of the odorant receptors appears to be an insect-specific solution for odor recognition, making the OR/Orco complex an attractive target for the development of highly selective insect repellents to disrupt olfactory-mediated host-seeking behaviors of insect disease vectors. Odor-evoked OR currents are independent of known G-protein-coupled second messenger pathways.</text>
</comment>
<comment type="similarity">
    <text evidence="10">Belongs to the insect chemoreceptor superfamily. Heteromeric odorant receptor channel (TC 1.A.69) family. Or67d subfamily.</text>
</comment>
<reference evidence="10" key="1">
    <citation type="journal article" date="2000" name="Science">
        <title>The genome sequence of Drosophila melanogaster.</title>
        <authorList>
            <person name="Adams M.D."/>
            <person name="Celniker S.E."/>
            <person name="Holt R.A."/>
            <person name="Evans C.A."/>
            <person name="Gocayne J.D."/>
            <person name="Amanatides P.G."/>
            <person name="Scherer S.E."/>
            <person name="Li P.W."/>
            <person name="Hoskins R.A."/>
            <person name="Galle R.F."/>
            <person name="George R.A."/>
            <person name="Lewis S.E."/>
            <person name="Richards S."/>
            <person name="Ashburner M."/>
            <person name="Henderson S.N."/>
            <person name="Sutton G.G."/>
            <person name="Wortman J.R."/>
            <person name="Yandell M.D."/>
            <person name="Zhang Q."/>
            <person name="Chen L.X."/>
            <person name="Brandon R.C."/>
            <person name="Rogers Y.-H.C."/>
            <person name="Blazej R.G."/>
            <person name="Champe M."/>
            <person name="Pfeiffer B.D."/>
            <person name="Wan K.H."/>
            <person name="Doyle C."/>
            <person name="Baxter E.G."/>
            <person name="Helt G."/>
            <person name="Nelson C.R."/>
            <person name="Miklos G.L.G."/>
            <person name="Abril J.F."/>
            <person name="Agbayani A."/>
            <person name="An H.-J."/>
            <person name="Andrews-Pfannkoch C."/>
            <person name="Baldwin D."/>
            <person name="Ballew R.M."/>
            <person name="Basu A."/>
            <person name="Baxendale J."/>
            <person name="Bayraktaroglu L."/>
            <person name="Beasley E.M."/>
            <person name="Beeson K.Y."/>
            <person name="Benos P.V."/>
            <person name="Berman B.P."/>
            <person name="Bhandari D."/>
            <person name="Bolshakov S."/>
            <person name="Borkova D."/>
            <person name="Botchan M.R."/>
            <person name="Bouck J."/>
            <person name="Brokstein P."/>
            <person name="Brottier P."/>
            <person name="Burtis K.C."/>
            <person name="Busam D.A."/>
            <person name="Butler H."/>
            <person name="Cadieu E."/>
            <person name="Center A."/>
            <person name="Chandra I."/>
            <person name="Cherry J.M."/>
            <person name="Cawley S."/>
            <person name="Dahlke C."/>
            <person name="Davenport L.B."/>
            <person name="Davies P."/>
            <person name="de Pablos B."/>
            <person name="Delcher A."/>
            <person name="Deng Z."/>
            <person name="Mays A.D."/>
            <person name="Dew I."/>
            <person name="Dietz S.M."/>
            <person name="Dodson K."/>
            <person name="Doup L.E."/>
            <person name="Downes M."/>
            <person name="Dugan-Rocha S."/>
            <person name="Dunkov B.C."/>
            <person name="Dunn P."/>
            <person name="Durbin K.J."/>
            <person name="Evangelista C.C."/>
            <person name="Ferraz C."/>
            <person name="Ferriera S."/>
            <person name="Fleischmann W."/>
            <person name="Fosler C."/>
            <person name="Gabrielian A.E."/>
            <person name="Garg N.S."/>
            <person name="Gelbart W.M."/>
            <person name="Glasser K."/>
            <person name="Glodek A."/>
            <person name="Gong F."/>
            <person name="Gorrell J.H."/>
            <person name="Gu Z."/>
            <person name="Guan P."/>
            <person name="Harris M."/>
            <person name="Harris N.L."/>
            <person name="Harvey D.A."/>
            <person name="Heiman T.J."/>
            <person name="Hernandez J.R."/>
            <person name="Houck J."/>
            <person name="Hostin D."/>
            <person name="Houston K.A."/>
            <person name="Howland T.J."/>
            <person name="Wei M.-H."/>
            <person name="Ibegwam C."/>
            <person name="Jalali M."/>
            <person name="Kalush F."/>
            <person name="Karpen G.H."/>
            <person name="Ke Z."/>
            <person name="Kennison J.A."/>
            <person name="Ketchum K.A."/>
            <person name="Kimmel B.E."/>
            <person name="Kodira C.D."/>
            <person name="Kraft C.L."/>
            <person name="Kravitz S."/>
            <person name="Kulp D."/>
            <person name="Lai Z."/>
            <person name="Lasko P."/>
            <person name="Lei Y."/>
            <person name="Levitsky A.A."/>
            <person name="Li J.H."/>
            <person name="Li Z."/>
            <person name="Liang Y."/>
            <person name="Lin X."/>
            <person name="Liu X."/>
            <person name="Mattei B."/>
            <person name="McIntosh T.C."/>
            <person name="McLeod M.P."/>
            <person name="McPherson D."/>
            <person name="Merkulov G."/>
            <person name="Milshina N.V."/>
            <person name="Mobarry C."/>
            <person name="Morris J."/>
            <person name="Moshrefi A."/>
            <person name="Mount S.M."/>
            <person name="Moy M."/>
            <person name="Murphy B."/>
            <person name="Murphy L."/>
            <person name="Muzny D.M."/>
            <person name="Nelson D.L."/>
            <person name="Nelson D.R."/>
            <person name="Nelson K.A."/>
            <person name="Nixon K."/>
            <person name="Nusskern D.R."/>
            <person name="Pacleb J.M."/>
            <person name="Palazzolo M."/>
            <person name="Pittman G.S."/>
            <person name="Pan S."/>
            <person name="Pollard J."/>
            <person name="Puri V."/>
            <person name="Reese M.G."/>
            <person name="Reinert K."/>
            <person name="Remington K."/>
            <person name="Saunders R.D.C."/>
            <person name="Scheeler F."/>
            <person name="Shen H."/>
            <person name="Shue B.C."/>
            <person name="Siden-Kiamos I."/>
            <person name="Simpson M."/>
            <person name="Skupski M.P."/>
            <person name="Smith T.J."/>
            <person name="Spier E."/>
            <person name="Spradling A.C."/>
            <person name="Stapleton M."/>
            <person name="Strong R."/>
            <person name="Sun E."/>
            <person name="Svirskas R."/>
            <person name="Tector C."/>
            <person name="Turner R."/>
            <person name="Venter E."/>
            <person name="Wang A.H."/>
            <person name="Wang X."/>
            <person name="Wang Z.-Y."/>
            <person name="Wassarman D.A."/>
            <person name="Weinstock G.M."/>
            <person name="Weissenbach J."/>
            <person name="Williams S.M."/>
            <person name="Woodage T."/>
            <person name="Worley K.C."/>
            <person name="Wu D."/>
            <person name="Yang S."/>
            <person name="Yao Q.A."/>
            <person name="Ye J."/>
            <person name="Yeh R.-F."/>
            <person name="Zaveri J.S."/>
            <person name="Zhan M."/>
            <person name="Zhang G."/>
            <person name="Zhao Q."/>
            <person name="Zheng L."/>
            <person name="Zheng X.H."/>
            <person name="Zhong F.N."/>
            <person name="Zhong W."/>
            <person name="Zhou X."/>
            <person name="Zhu S.C."/>
            <person name="Zhu X."/>
            <person name="Smith H.O."/>
            <person name="Gibbs R.A."/>
            <person name="Myers E.W."/>
            <person name="Rubin G.M."/>
            <person name="Venter J.C."/>
        </authorList>
    </citation>
    <scope>NUCLEOTIDE SEQUENCE [LARGE SCALE GENOMIC DNA]</scope>
    <source>
        <strain evidence="3">Berkeley</strain>
    </source>
</reference>
<reference evidence="10" key="2">
    <citation type="journal article" date="2002" name="Genome Biol.">
        <title>Annotation of the Drosophila melanogaster euchromatic genome: a systematic review.</title>
        <authorList>
            <person name="Misra S."/>
            <person name="Crosby M.A."/>
            <person name="Mungall C.J."/>
            <person name="Matthews B.B."/>
            <person name="Campbell K.S."/>
            <person name="Hradecky P."/>
            <person name="Huang Y."/>
            <person name="Kaminker J.S."/>
            <person name="Millburn G.H."/>
            <person name="Prochnik S.E."/>
            <person name="Smith C.D."/>
            <person name="Tupy J.L."/>
            <person name="Whitfield E.J."/>
            <person name="Bayraktaroglu L."/>
            <person name="Berman B.P."/>
            <person name="Bettencourt B.R."/>
            <person name="Celniker S.E."/>
            <person name="de Grey A.D.N.J."/>
            <person name="Drysdale R.A."/>
            <person name="Harris N.L."/>
            <person name="Richter J."/>
            <person name="Russo S."/>
            <person name="Schroeder A.J."/>
            <person name="Shu S.Q."/>
            <person name="Stapleton M."/>
            <person name="Yamada C."/>
            <person name="Ashburner M."/>
            <person name="Gelbart W.M."/>
            <person name="Rubin G.M."/>
            <person name="Lewis S.E."/>
        </authorList>
    </citation>
    <scope>GENOME REANNOTATION</scope>
    <source>
        <strain>Berkeley</strain>
    </source>
</reference>
<reference key="3">
    <citation type="journal article" date="2006" name="J. Neurosci.">
        <title>A pheromone receptor mediates 11-cis-vaccenyl acetate-induced responses in Drosophila.</title>
        <authorList>
            <person name="Ha T.S."/>
            <person name="Smith D.P."/>
        </authorList>
    </citation>
    <scope>FUNCTION</scope>
    <scope>TISSUE SPECIFICITY</scope>
</reference>
<reference key="4">
    <citation type="journal article" date="2007" name="Curr. Biol.">
        <title>Generalization of courtship learning in Drosophila is mediated by cis-vaccenyl acetate.</title>
        <authorList>
            <person name="Ejima A."/>
            <person name="Smith B.P."/>
            <person name="Lucas C."/>
            <person name="van der Goes van Naters W."/>
            <person name="Miller C.J."/>
            <person name="Carlson J.R."/>
            <person name="Levine J.D."/>
            <person name="Griffith L.C."/>
        </authorList>
    </citation>
    <scope>FUNCTION</scope>
</reference>
<reference key="5">
    <citation type="journal article" date="2007" name="Nature">
        <title>A single class of olfactory neurons mediates behavioural responses to a Drosophila sex pheromone.</title>
        <authorList>
            <person name="Kurtovic A."/>
            <person name="Widmer A."/>
            <person name="Dickson B.J."/>
        </authorList>
    </citation>
    <scope>FUNCTION</scope>
    <scope>DISRUPTION PHENOTYPE</scope>
</reference>
<reference key="6">
    <citation type="journal article" date="2007" name="Nature">
        <title>An essential role for a CD36-related receptor in pheromone detection in Drosophila.</title>
        <authorList>
            <person name="Benton R."/>
            <person name="Vannice K.S."/>
            <person name="Vosshall L.B."/>
        </authorList>
    </citation>
    <scope>FUNCTION</scope>
    <scope>TISSUE SPECIFICITY</scope>
</reference>
<reference key="7">
    <citation type="journal article" date="2008" name="Nature">
        <title>The Drosophila pheromone cVA activates a sexually dimorphic neural circuit.</title>
        <authorList>
            <person name="Datta S.R."/>
            <person name="Vasconcelos M.L."/>
            <person name="Ruta V."/>
            <person name="Luo S."/>
            <person name="Wong A."/>
            <person name="Demir E."/>
            <person name="Flores J."/>
            <person name="Balonze K."/>
            <person name="Dickson B.J."/>
            <person name="Axel R."/>
        </authorList>
    </citation>
    <scope>FUNCTION</scope>
</reference>
<reference key="8">
    <citation type="journal article" date="2010" name="Nature">
        <title>Identification of an aggression-promoting pheromone and its receptor neurons in Drosophila.</title>
        <authorList>
            <person name="Wang L."/>
            <person name="Anderson D.J."/>
        </authorList>
    </citation>
    <scope>FUNCTION</scope>
</reference>
<protein>
    <recommendedName>
        <fullName>Odorant receptor 67d</fullName>
    </recommendedName>
</protein>
<accession>Q9VT92</accession>